<comment type="function">
    <text evidence="2">Histone methyltransferase that specifically monomethylates 'Lys-20' of histone H4. H4 'Lys-20' monomethylation is enriched during mitosis and represents a specific tag for epigenetic transcriptional repression. Mainly functions in euchromatin regions, thereby playing a central role in the silencing of euchromatic genes. Required for cell proliferation, possibly by contributing to the maintenance of proper higher-order structure of DNA and chromosome condensation during mitosis.</text>
</comment>
<comment type="catalytic activity">
    <reaction evidence="2 4">
        <text>L-lysyl(20)-[histone H4] + S-adenosyl-L-methionine = N(6)-methyl-L-lysyl(20)-[histone H4] + S-adenosyl-L-homocysteine + H(+)</text>
        <dbReference type="Rhea" id="RHEA:60344"/>
        <dbReference type="Rhea" id="RHEA-COMP:15554"/>
        <dbReference type="Rhea" id="RHEA-COMP:15555"/>
        <dbReference type="ChEBI" id="CHEBI:15378"/>
        <dbReference type="ChEBI" id="CHEBI:29969"/>
        <dbReference type="ChEBI" id="CHEBI:57856"/>
        <dbReference type="ChEBI" id="CHEBI:59789"/>
        <dbReference type="ChEBI" id="CHEBI:61929"/>
        <dbReference type="EC" id="2.1.1.361"/>
    </reaction>
</comment>
<comment type="subcellular location">
    <subcellularLocation>
        <location evidence="1">Nucleus</location>
    </subcellularLocation>
    <subcellularLocation>
        <location evidence="1">Chromosome</location>
    </subcellularLocation>
    <text evidence="1">Specifically localizes to mitotic chromosomes. Associates to chromatin-dense and transcriptionally silent euchromatic regions (By similarity).</text>
</comment>
<comment type="similarity">
    <text evidence="4">Belongs to the class V-like SAM-binding methyltransferase superfamily. Histone-lysine methyltransferase family. PR/SET subfamily.</text>
</comment>
<comment type="sequence caution" evidence="6">
    <conflict type="erroneous gene model prediction">
        <sequence resource="EMBL-CDS" id="EAL28100"/>
    </conflict>
</comment>
<organism>
    <name type="scientific">Drosophila pseudoobscura pseudoobscura</name>
    <name type="common">Fruit fly</name>
    <dbReference type="NCBI Taxonomy" id="46245"/>
    <lineage>
        <taxon>Eukaryota</taxon>
        <taxon>Metazoa</taxon>
        <taxon>Ecdysozoa</taxon>
        <taxon>Arthropoda</taxon>
        <taxon>Hexapoda</taxon>
        <taxon>Insecta</taxon>
        <taxon>Pterygota</taxon>
        <taxon>Neoptera</taxon>
        <taxon>Endopterygota</taxon>
        <taxon>Diptera</taxon>
        <taxon>Brachycera</taxon>
        <taxon>Muscomorpha</taxon>
        <taxon>Ephydroidea</taxon>
        <taxon>Drosophilidae</taxon>
        <taxon>Drosophila</taxon>
        <taxon>Sophophora</taxon>
    </lineage>
</organism>
<reference key="1">
    <citation type="journal article" date="2005" name="Genome Res.">
        <title>Comparative genome sequencing of Drosophila pseudoobscura: chromosomal, gene, and cis-element evolution.</title>
        <authorList>
            <person name="Richards S."/>
            <person name="Liu Y."/>
            <person name="Bettencourt B.R."/>
            <person name="Hradecky P."/>
            <person name="Letovsky S."/>
            <person name="Nielsen R."/>
            <person name="Thornton K."/>
            <person name="Hubisz M.J."/>
            <person name="Chen R."/>
            <person name="Meisel R.P."/>
            <person name="Couronne O."/>
            <person name="Hua S."/>
            <person name="Smith M.A."/>
            <person name="Zhang P."/>
            <person name="Liu J."/>
            <person name="Bussemaker H.J."/>
            <person name="van Batenburg M.F."/>
            <person name="Howells S.L."/>
            <person name="Scherer S.E."/>
            <person name="Sodergren E."/>
            <person name="Matthews B.B."/>
            <person name="Crosby M.A."/>
            <person name="Schroeder A.J."/>
            <person name="Ortiz-Barrientos D."/>
            <person name="Rives C.M."/>
            <person name="Metzker M.L."/>
            <person name="Muzny D.M."/>
            <person name="Scott G."/>
            <person name="Steffen D."/>
            <person name="Wheeler D.A."/>
            <person name="Worley K.C."/>
            <person name="Havlak P."/>
            <person name="Durbin K.J."/>
            <person name="Egan A."/>
            <person name="Gill R."/>
            <person name="Hume J."/>
            <person name="Morgan M.B."/>
            <person name="Miner G."/>
            <person name="Hamilton C."/>
            <person name="Huang Y."/>
            <person name="Waldron L."/>
            <person name="Verduzco D."/>
            <person name="Clerc-Blankenburg K.P."/>
            <person name="Dubchak I."/>
            <person name="Noor M.A.F."/>
            <person name="Anderson W."/>
            <person name="White K.P."/>
            <person name="Clark A.G."/>
            <person name="Schaeffer S.W."/>
            <person name="Gelbart W.M."/>
            <person name="Weinstock G.M."/>
            <person name="Gibbs R.A."/>
        </authorList>
    </citation>
    <scope>NUCLEOTIDE SEQUENCE [LARGE SCALE GENOMIC DNA]</scope>
    <source>
        <strain>MV2-25 / Tucson 14011-0121.94</strain>
    </source>
</reference>
<gene>
    <name evidence="2" type="primary">Set8</name>
    <name evidence="2" type="synonym">PR-Set7</name>
    <name type="ORF">GA17259</name>
</gene>
<accession>Q297V5</accession>
<dbReference type="EC" id="2.1.1.361" evidence="2"/>
<dbReference type="EMBL" id="CM000070">
    <property type="protein sequence ID" value="EAL28100.2"/>
    <property type="status" value="ALT_SEQ"/>
    <property type="molecule type" value="Genomic_DNA"/>
</dbReference>
<dbReference type="SMR" id="Q297V5"/>
<dbReference type="FunCoup" id="Q297V5">
    <property type="interactions" value="488"/>
</dbReference>
<dbReference type="STRING" id="46245.Q297V5"/>
<dbReference type="eggNOG" id="KOG1085">
    <property type="taxonomic scope" value="Eukaryota"/>
</dbReference>
<dbReference type="InParanoid" id="Q297V5"/>
<dbReference type="Proteomes" id="UP000001819">
    <property type="component" value="Unplaced"/>
</dbReference>
<dbReference type="GO" id="GO:0005634">
    <property type="term" value="C:nucleus"/>
    <property type="evidence" value="ECO:0007669"/>
    <property type="project" value="UniProtKB-SubCell"/>
</dbReference>
<dbReference type="GO" id="GO:0005700">
    <property type="term" value="C:polytene chromosome"/>
    <property type="evidence" value="ECO:0000250"/>
    <property type="project" value="UniProtKB"/>
</dbReference>
<dbReference type="GO" id="GO:0042799">
    <property type="term" value="F:histone H4K20 methyltransferase activity"/>
    <property type="evidence" value="ECO:0000250"/>
    <property type="project" value="UniProtKB"/>
</dbReference>
<dbReference type="GO" id="GO:0140944">
    <property type="term" value="F:histone H4K20 monomethyltransferase activity"/>
    <property type="evidence" value="ECO:0007669"/>
    <property type="project" value="UniProtKB-EC"/>
</dbReference>
<dbReference type="GO" id="GO:0051301">
    <property type="term" value="P:cell division"/>
    <property type="evidence" value="ECO:0007669"/>
    <property type="project" value="UniProtKB-KW"/>
</dbReference>
<dbReference type="GO" id="GO:0032259">
    <property type="term" value="P:methylation"/>
    <property type="evidence" value="ECO:0007669"/>
    <property type="project" value="UniProtKB-KW"/>
</dbReference>
<dbReference type="GO" id="GO:0043516">
    <property type="term" value="P:regulation of DNA damage response, signal transduction by p53 class mediator"/>
    <property type="evidence" value="ECO:0007669"/>
    <property type="project" value="TreeGrafter"/>
</dbReference>
<dbReference type="GO" id="GO:0006357">
    <property type="term" value="P:regulation of transcription by RNA polymerase II"/>
    <property type="evidence" value="ECO:0007669"/>
    <property type="project" value="TreeGrafter"/>
</dbReference>
<dbReference type="CDD" id="cd10528">
    <property type="entry name" value="SET_SETD8"/>
    <property type="match status" value="1"/>
</dbReference>
<dbReference type="FunFam" id="2.170.270.10:FF:000053">
    <property type="entry name" value="Histone-lysine N-methyltransferase"/>
    <property type="match status" value="1"/>
</dbReference>
<dbReference type="Gene3D" id="2.170.270.10">
    <property type="entry name" value="SET domain"/>
    <property type="match status" value="1"/>
</dbReference>
<dbReference type="InterPro" id="IPR051760">
    <property type="entry name" value="KMT5A"/>
</dbReference>
<dbReference type="InterPro" id="IPR016858">
    <property type="entry name" value="KMT5A-like"/>
</dbReference>
<dbReference type="InterPro" id="IPR047266">
    <property type="entry name" value="KMT5A-like_SET"/>
</dbReference>
<dbReference type="InterPro" id="IPR001214">
    <property type="entry name" value="SET_dom"/>
</dbReference>
<dbReference type="InterPro" id="IPR046341">
    <property type="entry name" value="SET_dom_sf"/>
</dbReference>
<dbReference type="PANTHER" id="PTHR46167">
    <property type="entry name" value="N-LYSINE METHYLTRANSFERASE KMT5A"/>
    <property type="match status" value="1"/>
</dbReference>
<dbReference type="PANTHER" id="PTHR46167:SF1">
    <property type="entry name" value="N-LYSINE METHYLTRANSFERASE KMT5A"/>
    <property type="match status" value="1"/>
</dbReference>
<dbReference type="Pfam" id="PF00856">
    <property type="entry name" value="SET"/>
    <property type="match status" value="1"/>
</dbReference>
<dbReference type="SMART" id="SM00317">
    <property type="entry name" value="SET"/>
    <property type="match status" value="1"/>
</dbReference>
<dbReference type="SUPFAM" id="SSF82199">
    <property type="entry name" value="SET domain"/>
    <property type="match status" value="1"/>
</dbReference>
<dbReference type="PROSITE" id="PS51571">
    <property type="entry name" value="SAM_MT43_PR_SET"/>
    <property type="match status" value="1"/>
</dbReference>
<dbReference type="PROSITE" id="PS50280">
    <property type="entry name" value="SET"/>
    <property type="match status" value="1"/>
</dbReference>
<protein>
    <recommendedName>
        <fullName evidence="2">Histone-lysine N-methyltransferase Set8</fullName>
        <ecNumber evidence="2">2.1.1.361</ecNumber>
    </recommendedName>
    <alternativeName>
        <fullName>PR/SET domain-containing protein 07</fullName>
    </alternativeName>
</protein>
<evidence type="ECO:0000250" key="1"/>
<evidence type="ECO:0000250" key="2">
    <source>
        <dbReference type="UniProtKB" id="Q9VFK6"/>
    </source>
</evidence>
<evidence type="ECO:0000255" key="3">
    <source>
        <dbReference type="PROSITE-ProRule" id="PRU00190"/>
    </source>
</evidence>
<evidence type="ECO:0000255" key="4">
    <source>
        <dbReference type="PROSITE-ProRule" id="PRU00904"/>
    </source>
</evidence>
<evidence type="ECO:0000256" key="5">
    <source>
        <dbReference type="SAM" id="MobiDB-lite"/>
    </source>
</evidence>
<evidence type="ECO:0000305" key="6"/>
<feature type="chain" id="PRO_0000317003" description="Histone-lysine N-methyltransferase Set8">
    <location>
        <begin position="1"/>
        <end position="691"/>
    </location>
</feature>
<feature type="domain" description="SET" evidence="3">
    <location>
        <begin position="555"/>
        <end position="676"/>
    </location>
</feature>
<feature type="region of interest" description="Disordered" evidence="5">
    <location>
        <begin position="1"/>
        <end position="22"/>
    </location>
</feature>
<feature type="region of interest" description="Disordered" evidence="5">
    <location>
        <begin position="211"/>
        <end position="234"/>
    </location>
</feature>
<feature type="region of interest" description="Disordered" evidence="5">
    <location>
        <begin position="345"/>
        <end position="381"/>
    </location>
</feature>
<feature type="region of interest" description="Disordered" evidence="5">
    <location>
        <begin position="422"/>
        <end position="450"/>
    </location>
</feature>
<feature type="region of interest" description="Disordered" evidence="5">
    <location>
        <begin position="484"/>
        <end position="516"/>
    </location>
</feature>
<feature type="compositionally biased region" description="Low complexity" evidence="5">
    <location>
        <begin position="220"/>
        <end position="232"/>
    </location>
</feature>
<feature type="compositionally biased region" description="Pro residues" evidence="5">
    <location>
        <begin position="431"/>
        <end position="446"/>
    </location>
</feature>
<feature type="compositionally biased region" description="Low complexity" evidence="5">
    <location>
        <begin position="484"/>
        <end position="503"/>
    </location>
</feature>
<feature type="binding site" evidence="4">
    <location>
        <begin position="565"/>
        <end position="567"/>
    </location>
    <ligand>
        <name>S-adenosyl-L-methionine</name>
        <dbReference type="ChEBI" id="CHEBI:59789"/>
    </ligand>
</feature>
<feature type="binding site" evidence="3 4">
    <location>
        <position position="610"/>
    </location>
    <ligand>
        <name>S-adenosyl-L-methionine</name>
        <dbReference type="ChEBI" id="CHEBI:59789"/>
    </ligand>
</feature>
<feature type="binding site" evidence="4">
    <location>
        <begin position="637"/>
        <end position="638"/>
    </location>
    <ligand>
        <name>S-adenosyl-L-methionine</name>
        <dbReference type="ChEBI" id="CHEBI:59789"/>
    </ligand>
</feature>
<sequence length="691" mass="74929">MIMVRRRARPAKETGGGSAAAAVASDGALSMDTAAAVAVAGGNHLLDDQYFASPKRKDCRLMKASENLKISSDVVALEEEANNKGVKPTKALTDRTIGVPLATRSQTRTIENFFKADAAAKCGITLNTHHPEPIKEQKTISTTELPLSDELGDEELERVVGDLLYDGHSTASSDSPSYQNENEHEEVMQDTFALRETSPVPVLMADFQTHRSGLRDSHSSSHSSSSSGGASATTDNIFLQEPVLTLDIDRTPTKASSIKINKSFELASAVFSSPPSVLNACRFNQIVTLNGGGQCEPQPVVVAQPQPQPQLQLPPHHNGFELDQHDSSSCDSGVACNLTISAESPAAGGGAGAAARRRKPATPHRILCPSPIKTLPRGDGGGLIVPGARKTSGIMMKGDLLSPRKSPRKLPTTTAAVAACKSRRRLNQPKPQAPYQPQQPQPPPGTQPTNEDVVAAEELENLNKIPIANSNKSNNHVKAMLKPAPAKPRAALTKGSKTKTGSKIQPGPLPLAATNGNREMTDFFPVRRSVRKTKTAVKEEWLRNLEQAVLEERSEGLQVRNFMGKGRGVVAVRHFKRNEFVVEYVGDLISISDATDRERRYALDENAGCYMYYFKHKNQQYCIDATVDTGKLGRLINHSRAGNLMTKVVVIKQRPHLVLLAKDDIAPGEELTYDYGDRSKESLLHHPWLAF</sequence>
<keyword id="KW-0131">Cell cycle</keyword>
<keyword id="KW-0132">Cell division</keyword>
<keyword id="KW-0156">Chromatin regulator</keyword>
<keyword id="KW-0158">Chromosome</keyword>
<keyword id="KW-0489">Methyltransferase</keyword>
<keyword id="KW-0498">Mitosis</keyword>
<keyword id="KW-0539">Nucleus</keyword>
<keyword id="KW-1185">Reference proteome</keyword>
<keyword id="KW-0678">Repressor</keyword>
<keyword id="KW-0949">S-adenosyl-L-methionine</keyword>
<keyword id="KW-0804">Transcription</keyword>
<keyword id="KW-0805">Transcription regulation</keyword>
<keyword id="KW-0808">Transferase</keyword>
<proteinExistence type="inferred from homology"/>
<name>KMT5A_DROPS</name>